<reference key="1">
    <citation type="submission" date="2004-06" db="EMBL/GenBank/DDBJ databases">
        <authorList>
            <consortium name="NIH - Xenopus Gene Collection (XGC) project"/>
        </authorList>
    </citation>
    <scope>NUCLEOTIDE SEQUENCE [LARGE SCALE MRNA]</scope>
    <source>
        <tissue>Embryo</tissue>
    </source>
</reference>
<feature type="chain" id="PRO_0000315999" description="Cytosolic 10-formyltetrahydrofolate dehydrogenase">
    <location>
        <begin position="1"/>
        <end position="902"/>
    </location>
</feature>
<feature type="domain" description="Carrier" evidence="3">
    <location>
        <begin position="318"/>
        <end position="395"/>
    </location>
</feature>
<feature type="region of interest" description="Hydrolase domain" evidence="2">
    <location>
        <begin position="1"/>
        <end position="310"/>
    </location>
</feature>
<feature type="region of interest" description="Aldehyde dehydrogenase domain" evidence="2">
    <location>
        <begin position="417"/>
        <end position="902"/>
    </location>
</feature>
<feature type="active site" description="Proton donor" evidence="2">
    <location>
        <position position="106"/>
    </location>
</feature>
<feature type="active site" description="Proton acceptor" evidence="2">
    <location>
        <position position="673"/>
    </location>
</feature>
<feature type="active site" description="Proton donor" evidence="2">
    <location>
        <position position="707"/>
    </location>
</feature>
<feature type="binding site" evidence="1">
    <location>
        <begin position="88"/>
        <end position="90"/>
    </location>
    <ligand>
        <name>(6R)-10-formyltetrahydrofolate</name>
        <dbReference type="ChEBI" id="CHEBI:195366"/>
    </ligand>
</feature>
<feature type="binding site" evidence="1">
    <location>
        <position position="142"/>
    </location>
    <ligand>
        <name>(6R)-10-formyltetrahydrofolate</name>
        <dbReference type="ChEBI" id="CHEBI:195366"/>
    </ligand>
</feature>
<feature type="binding site" evidence="2">
    <location>
        <begin position="571"/>
        <end position="573"/>
    </location>
    <ligand>
        <name>NADP(+)</name>
        <dbReference type="ChEBI" id="CHEBI:58349"/>
    </ligand>
</feature>
<feature type="binding site" evidence="2">
    <location>
        <begin position="597"/>
        <end position="600"/>
    </location>
    <ligand>
        <name>NADP(+)</name>
        <dbReference type="ChEBI" id="CHEBI:58349"/>
    </ligand>
</feature>
<feature type="binding site" evidence="2">
    <location>
        <begin position="630"/>
        <end position="635"/>
    </location>
    <ligand>
        <name>NADP(+)</name>
        <dbReference type="ChEBI" id="CHEBI:58349"/>
    </ligand>
</feature>
<feature type="binding site" evidence="2">
    <location>
        <begin position="650"/>
        <end position="651"/>
    </location>
    <ligand>
        <name>NADP(+)</name>
        <dbReference type="ChEBI" id="CHEBI:58349"/>
    </ligand>
</feature>
<feature type="binding site" evidence="2">
    <location>
        <begin position="673"/>
        <end position="674"/>
    </location>
    <ligand>
        <name>NADP(+)</name>
        <dbReference type="ChEBI" id="CHEBI:58349"/>
    </ligand>
</feature>
<feature type="binding site" evidence="2">
    <location>
        <position position="757"/>
    </location>
    <ligand>
        <name>NADP(+)</name>
        <dbReference type="ChEBI" id="CHEBI:58349"/>
    </ligand>
</feature>
<feature type="binding site" evidence="2">
    <location>
        <begin position="804"/>
        <end position="806"/>
    </location>
    <ligand>
        <name>NADP(+)</name>
        <dbReference type="ChEBI" id="CHEBI:58349"/>
    </ligand>
</feature>
<feature type="site" description="Essential for catalytic activity" evidence="2">
    <location>
        <position position="142"/>
    </location>
</feature>
<feature type="modified residue" description="O-(pantetheine 4'-phosphoryl)serine" evidence="2 3">
    <location>
        <position position="354"/>
    </location>
</feature>
<organism>
    <name type="scientific">Xenopus laevis</name>
    <name type="common">African clawed frog</name>
    <dbReference type="NCBI Taxonomy" id="8355"/>
    <lineage>
        <taxon>Eukaryota</taxon>
        <taxon>Metazoa</taxon>
        <taxon>Chordata</taxon>
        <taxon>Craniata</taxon>
        <taxon>Vertebrata</taxon>
        <taxon>Euteleostomi</taxon>
        <taxon>Amphibia</taxon>
        <taxon>Batrachia</taxon>
        <taxon>Anura</taxon>
        <taxon>Pipoidea</taxon>
        <taxon>Pipidae</taxon>
        <taxon>Xenopodinae</taxon>
        <taxon>Xenopus</taxon>
        <taxon>Xenopus</taxon>
    </lineage>
</organism>
<name>AL1L1_XENLA</name>
<comment type="function">
    <text evidence="2">Cytosolic 10-formyltetrahydrofolate dehydrogenase that catalyzes the NADP(+)-dependent conversion of 10-formyltetrahydrofolate to tetrahydrofolate and carbon dioxide. May also have an NADP(+)-dependent aldehyde dehydrogenase activity towards formaldehyde, acetaldehyde, propionaldehyde, and benzaldehyde.</text>
</comment>
<comment type="catalytic activity">
    <reaction evidence="2">
        <text>(6R)-10-formyltetrahydrofolate + NADP(+) + H2O = (6S)-5,6,7,8-tetrahydrofolate + CO2 + NADPH + H(+)</text>
        <dbReference type="Rhea" id="RHEA:10180"/>
        <dbReference type="ChEBI" id="CHEBI:15377"/>
        <dbReference type="ChEBI" id="CHEBI:15378"/>
        <dbReference type="ChEBI" id="CHEBI:16526"/>
        <dbReference type="ChEBI" id="CHEBI:57453"/>
        <dbReference type="ChEBI" id="CHEBI:57783"/>
        <dbReference type="ChEBI" id="CHEBI:58349"/>
        <dbReference type="ChEBI" id="CHEBI:195366"/>
        <dbReference type="EC" id="1.5.1.6"/>
    </reaction>
    <physiologicalReaction direction="left-to-right" evidence="2">
        <dbReference type="Rhea" id="RHEA:10181"/>
    </physiologicalReaction>
</comment>
<comment type="subunit">
    <text evidence="2">Homotetramer.</text>
</comment>
<comment type="subcellular location">
    <subcellularLocation>
        <location evidence="2">Cytoplasm</location>
        <location evidence="2">Cytosol</location>
    </subcellularLocation>
</comment>
<comment type="domain">
    <text evidence="2">The N-terminal hydrolase domain has an NADP-independent formyltetrahydrofolate hydrolase activity, releasing formate and tetrahydrofolate.</text>
</comment>
<comment type="domain">
    <text evidence="2">The C-terminal aldehyde dehydrogenase domain has an NADP-dependent dehydrogenase activity. It catalyzes the oxidation of formate, released by the hydrolysis of formyltetrahydrofolate, into CO2.</text>
</comment>
<comment type="domain">
    <text evidence="2">The carrier domain is phosphopantetheinylated and uses the 4'-phosphopantetheine/4'-PP swinging arm to transfer the formyl group released by the N-terminal formyltetrahydrofolate hydrolase activity to the C-terminal aldehyde dehydrogenase domain that catalyzes its NADP-dependent oxidation into CO2. The overall NADP-dependent physiological reaction requires the 3 domains (N-terminal hydrolase, C-terminal aldehyde dehydrogenase and carrier domains) to convert formyltetrahydrofolate into tetrahydrofolate and CO2.</text>
</comment>
<comment type="PTM">
    <text evidence="2">Phosphopantetheinylation at Ser-354 by AASDHPPT is required for the formyltetrahydrofolate dehydrogenase activity.</text>
</comment>
<comment type="similarity">
    <text evidence="4">In the N-terminal section; belongs to the GART family.</text>
</comment>
<comment type="similarity">
    <text evidence="4">In the C-terminal section; belongs to the aldehyde dehydrogenase family. ALDH1L subfamily.</text>
</comment>
<evidence type="ECO:0000250" key="1">
    <source>
        <dbReference type="UniProtKB" id="O75891"/>
    </source>
</evidence>
<evidence type="ECO:0000250" key="2">
    <source>
        <dbReference type="UniProtKB" id="P28037"/>
    </source>
</evidence>
<evidence type="ECO:0000255" key="3">
    <source>
        <dbReference type="PROSITE-ProRule" id="PRU00258"/>
    </source>
</evidence>
<evidence type="ECO:0000305" key="4"/>
<sequence>MKIAVIGQSLFGREVYRELLKEGHQVVGVFTIPDKNGKADPLGADAEKDGIPVFKFPRWRVKGQAIPEVVEKYKALEAELNVLPFCSQFIPMEVIDCPKHGSIIYHPSILPRHRGASAINWTLMQGDKIGGFTVFWADDGLDTGDILLQRQCEVLPDDTVNTIYNRFLFPEGVKGMVEAVRLIAEGNAPRIKQPTEGATYDPMQKKENAKINWDQPAEDIHNFIRGNDKVPGAWTVVDDQQLTFFGSSFTRNGPAPDGQPLEIPGASRPALVTKTGLVLFGNDGERLTVKNIQFEDGKMIPASQYFKTADSAALQLSEEEQKVSEEIRAAWRRILTNVSEIEDSTDFFKAGAASMDVVRLVEEVKLKCNGLQLQNEDVYMATKFEEFIQMVVRRMRGEDGEEELVIDYVEKEINNMTVKIPHQLFINGQFMDAEGGKSYDTINPTDGTAICKVSLAQISDIDRAVAAAKEAFENGEWGKMNPRDRGRLLYRLADLMEEHQEELATIESIDSGAVYTLALKTHVGMSIQTFRYFAGWCDKIQGRTIPINQARPNRNLTFTRREPIGVCGIVIPWNYPLMMLAWKTAACLTAGNTVVLKPAQVTPLTALKFAELSVKAGIPKGVINILPGAGSLIGQRLSDHPDVRKIGFTGSTPIGKQIMKSCAVSNVKKVSLELGGKSPLIIFHDCDLDKAVRMGMSSVFFNKGENCIAAGRLFLEESIHDEFVKRVVEEVKKMKIGDPLDRSTDHGPQNHKAHLDKLIEYCQTGVKEGGKLVYGGKQVERPGFFFEPTIFTDVTDEMFIAKEESFGPVMIISKFNDGDIDGVLKRANDSEFGLASGVFTKDINKALYVSEKLQAGTVFVNTYNKTDVAAPFGGFKQSGFGKDLGEEALNEYLKTKAVTIEY</sequence>
<dbReference type="EC" id="1.5.1.6" evidence="2"/>
<dbReference type="EMBL" id="BC073490">
    <property type="protein sequence ID" value="AAH73490.1"/>
    <property type="molecule type" value="mRNA"/>
</dbReference>
<dbReference type="RefSeq" id="NP_001085894.1">
    <property type="nucleotide sequence ID" value="NM_001092425.2"/>
</dbReference>
<dbReference type="SMR" id="Q6GNL7"/>
<dbReference type="DNASU" id="444321"/>
<dbReference type="GeneID" id="444321"/>
<dbReference type="KEGG" id="xla:444321"/>
<dbReference type="AGR" id="Xenbase:XB-GENE-1016244"/>
<dbReference type="CTD" id="444321"/>
<dbReference type="Xenbase" id="XB-GENE-1016244">
    <property type="gene designation" value="aldh1l1.L"/>
</dbReference>
<dbReference type="OrthoDB" id="310895at2759"/>
<dbReference type="Proteomes" id="UP000186698">
    <property type="component" value="Chromosome 4L"/>
</dbReference>
<dbReference type="Bgee" id="444321">
    <property type="expression patterns" value="Expressed in kidney and 15 other cell types or tissues"/>
</dbReference>
<dbReference type="GO" id="GO:0005829">
    <property type="term" value="C:cytosol"/>
    <property type="evidence" value="ECO:0000250"/>
    <property type="project" value="UniProtKB"/>
</dbReference>
<dbReference type="GO" id="GO:0004029">
    <property type="term" value="F:aldehyde dehydrogenase (NAD+) activity"/>
    <property type="evidence" value="ECO:0000318"/>
    <property type="project" value="GO_Central"/>
</dbReference>
<dbReference type="GO" id="GO:0016155">
    <property type="term" value="F:formyltetrahydrofolate dehydrogenase activity"/>
    <property type="evidence" value="ECO:0000250"/>
    <property type="project" value="UniProtKB"/>
</dbReference>
<dbReference type="GO" id="GO:0009258">
    <property type="term" value="P:10-formyltetrahydrofolate catabolic process"/>
    <property type="evidence" value="ECO:0000250"/>
    <property type="project" value="UniProtKB"/>
</dbReference>
<dbReference type="GO" id="GO:0009058">
    <property type="term" value="P:biosynthetic process"/>
    <property type="evidence" value="ECO:0007669"/>
    <property type="project" value="InterPro"/>
</dbReference>
<dbReference type="GO" id="GO:0006740">
    <property type="term" value="P:NADPH regeneration"/>
    <property type="evidence" value="ECO:0000250"/>
    <property type="project" value="UniProtKB"/>
</dbReference>
<dbReference type="GO" id="GO:0006730">
    <property type="term" value="P:one-carbon metabolic process"/>
    <property type="evidence" value="ECO:0007669"/>
    <property type="project" value="UniProtKB-KW"/>
</dbReference>
<dbReference type="CDD" id="cd07140">
    <property type="entry name" value="ALDH_F1L_FTFDH"/>
    <property type="match status" value="1"/>
</dbReference>
<dbReference type="CDD" id="cd08703">
    <property type="entry name" value="FDH_Hydrolase_C"/>
    <property type="match status" value="1"/>
</dbReference>
<dbReference type="CDD" id="cd08647">
    <property type="entry name" value="FMT_core_FDH_N"/>
    <property type="match status" value="1"/>
</dbReference>
<dbReference type="FunFam" id="1.10.1200.10:FF:000002">
    <property type="entry name" value="10-formyltetrahydrofolate dehydrogenase"/>
    <property type="match status" value="1"/>
</dbReference>
<dbReference type="FunFam" id="3.10.25.10:FF:000002">
    <property type="entry name" value="10-formyltetrahydrofolate dehydrogenase"/>
    <property type="match status" value="1"/>
</dbReference>
<dbReference type="FunFam" id="3.40.50.170:FF:000002">
    <property type="entry name" value="10-formyltetrahydrofolate dehydrogenase"/>
    <property type="match status" value="1"/>
</dbReference>
<dbReference type="FunFam" id="3.40.605.10:FF:000026">
    <property type="entry name" value="Aldehyde dehydrogenase, putative"/>
    <property type="match status" value="1"/>
</dbReference>
<dbReference type="FunFam" id="3.40.309.10:FF:000008">
    <property type="entry name" value="Cytosolic 10-formyltetrahydrofolate dehydrogenase"/>
    <property type="match status" value="1"/>
</dbReference>
<dbReference type="FunFam" id="3.40.605.10:FF:000009">
    <property type="entry name" value="Cytosolic 10-formyltetrahydrofolate dehydrogenase"/>
    <property type="match status" value="1"/>
</dbReference>
<dbReference type="Gene3D" id="1.10.1200.10">
    <property type="entry name" value="ACP-like"/>
    <property type="match status" value="1"/>
</dbReference>
<dbReference type="Gene3D" id="3.40.605.10">
    <property type="entry name" value="Aldehyde Dehydrogenase, Chain A, domain 1"/>
    <property type="match status" value="1"/>
</dbReference>
<dbReference type="Gene3D" id="3.40.309.10">
    <property type="entry name" value="Aldehyde Dehydrogenase, Chain A, domain 2"/>
    <property type="match status" value="1"/>
</dbReference>
<dbReference type="Gene3D" id="3.10.25.10">
    <property type="entry name" value="Formyl transferase, C-terminal domain"/>
    <property type="match status" value="1"/>
</dbReference>
<dbReference type="Gene3D" id="3.40.50.170">
    <property type="entry name" value="Formyl transferase, N-terminal domain"/>
    <property type="match status" value="1"/>
</dbReference>
<dbReference type="InterPro" id="IPR011407">
    <property type="entry name" value="10_FTHF_DH"/>
</dbReference>
<dbReference type="InterPro" id="IPR036736">
    <property type="entry name" value="ACP-like_sf"/>
</dbReference>
<dbReference type="InterPro" id="IPR016161">
    <property type="entry name" value="Ald_DH/histidinol_DH"/>
</dbReference>
<dbReference type="InterPro" id="IPR016163">
    <property type="entry name" value="Ald_DH_C"/>
</dbReference>
<dbReference type="InterPro" id="IPR016160">
    <property type="entry name" value="Ald_DH_CS_CYS"/>
</dbReference>
<dbReference type="InterPro" id="IPR029510">
    <property type="entry name" value="Ald_DH_CS_GLU"/>
</dbReference>
<dbReference type="InterPro" id="IPR016162">
    <property type="entry name" value="Ald_DH_N"/>
</dbReference>
<dbReference type="InterPro" id="IPR015590">
    <property type="entry name" value="Aldehyde_DH_dom"/>
</dbReference>
<dbReference type="InterPro" id="IPR005793">
    <property type="entry name" value="Formyl_trans_C"/>
</dbReference>
<dbReference type="InterPro" id="IPR037022">
    <property type="entry name" value="Formyl_trans_C_sf"/>
</dbReference>
<dbReference type="InterPro" id="IPR002376">
    <property type="entry name" value="Formyl_transf_N"/>
</dbReference>
<dbReference type="InterPro" id="IPR036477">
    <property type="entry name" value="Formyl_transf_N_sf"/>
</dbReference>
<dbReference type="InterPro" id="IPR011034">
    <property type="entry name" value="Formyl_transferase-like_C_sf"/>
</dbReference>
<dbReference type="InterPro" id="IPR001555">
    <property type="entry name" value="GART_AS"/>
</dbReference>
<dbReference type="InterPro" id="IPR009081">
    <property type="entry name" value="PP-bd_ACP"/>
</dbReference>
<dbReference type="PANTHER" id="PTHR11699">
    <property type="entry name" value="ALDEHYDE DEHYDROGENASE-RELATED"/>
    <property type="match status" value="1"/>
</dbReference>
<dbReference type="Pfam" id="PF00171">
    <property type="entry name" value="Aldedh"/>
    <property type="match status" value="1"/>
</dbReference>
<dbReference type="Pfam" id="PF02911">
    <property type="entry name" value="Formyl_trans_C"/>
    <property type="match status" value="1"/>
</dbReference>
<dbReference type="Pfam" id="PF00551">
    <property type="entry name" value="Formyl_trans_N"/>
    <property type="match status" value="1"/>
</dbReference>
<dbReference type="PIRSF" id="PIRSF036489">
    <property type="entry name" value="10-FTHFDH"/>
    <property type="match status" value="1"/>
</dbReference>
<dbReference type="SUPFAM" id="SSF53720">
    <property type="entry name" value="ALDH-like"/>
    <property type="match status" value="1"/>
</dbReference>
<dbReference type="SUPFAM" id="SSF50486">
    <property type="entry name" value="FMT C-terminal domain-like"/>
    <property type="match status" value="1"/>
</dbReference>
<dbReference type="SUPFAM" id="SSF53328">
    <property type="entry name" value="Formyltransferase"/>
    <property type="match status" value="1"/>
</dbReference>
<dbReference type="PROSITE" id="PS00070">
    <property type="entry name" value="ALDEHYDE_DEHYDR_CYS"/>
    <property type="match status" value="1"/>
</dbReference>
<dbReference type="PROSITE" id="PS00687">
    <property type="entry name" value="ALDEHYDE_DEHYDR_GLU"/>
    <property type="match status" value="1"/>
</dbReference>
<dbReference type="PROSITE" id="PS50075">
    <property type="entry name" value="CARRIER"/>
    <property type="match status" value="1"/>
</dbReference>
<dbReference type="PROSITE" id="PS00373">
    <property type="entry name" value="GART"/>
    <property type="match status" value="1"/>
</dbReference>
<keyword id="KW-0963">Cytoplasm</keyword>
<keyword id="KW-0521">NADP</keyword>
<keyword id="KW-0554">One-carbon metabolism</keyword>
<keyword id="KW-0560">Oxidoreductase</keyword>
<keyword id="KW-0596">Phosphopantetheine</keyword>
<keyword id="KW-0597">Phosphoprotein</keyword>
<keyword id="KW-1185">Reference proteome</keyword>
<accession>Q6GNL7</accession>
<protein>
    <recommendedName>
        <fullName evidence="4">Cytosolic 10-formyltetrahydrofolate dehydrogenase</fullName>
        <shortName>10-FTHFDH</shortName>
        <shortName>FDH</shortName>
        <ecNumber evidence="2">1.5.1.6</ecNumber>
    </recommendedName>
    <alternativeName>
        <fullName>Aldehyde dehydrogenase family 1 member L1</fullName>
    </alternativeName>
</protein>
<proteinExistence type="evidence at transcript level"/>
<gene>
    <name type="primary">aldh1l1</name>
</gene>